<proteinExistence type="inferred from homology"/>
<reference key="1">
    <citation type="submission" date="2009-02" db="EMBL/GenBank/DDBJ databases">
        <title>Vibrio splendidus str. LGP32 complete genome.</title>
        <authorList>
            <person name="Mazel D."/>
            <person name="Le Roux F."/>
        </authorList>
    </citation>
    <scope>NUCLEOTIDE SEQUENCE [LARGE SCALE GENOMIC DNA]</scope>
    <source>
        <strain>LGP32</strain>
    </source>
</reference>
<sequence>MTVMEHTKAAQIDLTKHGLTGVTEVLRNPSYEQLFVEETLPGLEGYEKGVVTELGSVAVDTGIFTGRSPKDKYIVKDDTTRDTMWWSDQGKNDNKPITTEVWDELKELVTTQLSGKRLFVIDGYCGANPDTRLSVRIITEVAWQAHFVKNMFIRPTDEELATFEPDFVVMNGAKTTNPNWEKQGLNSENFVAFNLTERVQIIGGTWYGGEMKKGMFAMMNYLLPLQGIASMHCSANVGEEGDVAIFFGLSGTGKTTLSTDPKRELIGDDEHGWDDDGIFNFEGGCYAKTIRLSKEAEPEIYNAIRRDALLENVTVRGDGSIDFDDGSKTENTRVSYPIHHIDNIVKPVSKAGHAQKVIFLTADAFGVLPPVSKLTPEQTKYHFLSGFTAKLAGTERGITEPTPTFSAAFGAAFLTLHPTQYAEVLVKRMEAAGAEAYLVNTGWNGTGKRISIQDTRGIIDAILDGSIDQAETKVIPMFNLEVPLALHDVDPAILDPRDTYTDPLQWESKAKDLAERFINNFDKYTDNAEGKSLVAAGPQLD</sequence>
<gene>
    <name evidence="1" type="primary">pckA</name>
    <name type="ordered locus">VS_0131</name>
</gene>
<accession>B7VHF2</accession>
<feature type="chain" id="PRO_1000192339" description="Phosphoenolpyruvate carboxykinase (ATP)">
    <location>
        <begin position="1"/>
        <end position="541"/>
    </location>
</feature>
<feature type="binding site" evidence="1">
    <location>
        <position position="67"/>
    </location>
    <ligand>
        <name>substrate</name>
    </ligand>
</feature>
<feature type="binding site" evidence="1">
    <location>
        <position position="207"/>
    </location>
    <ligand>
        <name>substrate</name>
    </ligand>
</feature>
<feature type="binding site" evidence="1">
    <location>
        <position position="213"/>
    </location>
    <ligand>
        <name>ATP</name>
        <dbReference type="ChEBI" id="CHEBI:30616"/>
    </ligand>
</feature>
<feature type="binding site" evidence="1">
    <location>
        <position position="213"/>
    </location>
    <ligand>
        <name>Mn(2+)</name>
        <dbReference type="ChEBI" id="CHEBI:29035"/>
    </ligand>
</feature>
<feature type="binding site" evidence="1">
    <location>
        <position position="213"/>
    </location>
    <ligand>
        <name>substrate</name>
    </ligand>
</feature>
<feature type="binding site" evidence="1">
    <location>
        <position position="232"/>
    </location>
    <ligand>
        <name>ATP</name>
        <dbReference type="ChEBI" id="CHEBI:30616"/>
    </ligand>
</feature>
<feature type="binding site" evidence="1">
    <location>
        <position position="232"/>
    </location>
    <ligand>
        <name>Mn(2+)</name>
        <dbReference type="ChEBI" id="CHEBI:29035"/>
    </ligand>
</feature>
<feature type="binding site" evidence="1">
    <location>
        <begin position="248"/>
        <end position="256"/>
    </location>
    <ligand>
        <name>ATP</name>
        <dbReference type="ChEBI" id="CHEBI:30616"/>
    </ligand>
</feature>
<feature type="binding site" evidence="1">
    <location>
        <position position="269"/>
    </location>
    <ligand>
        <name>Mn(2+)</name>
        <dbReference type="ChEBI" id="CHEBI:29035"/>
    </ligand>
</feature>
<feature type="binding site" evidence="1">
    <location>
        <position position="297"/>
    </location>
    <ligand>
        <name>ATP</name>
        <dbReference type="ChEBI" id="CHEBI:30616"/>
    </ligand>
</feature>
<feature type="binding site" evidence="1">
    <location>
        <position position="333"/>
    </location>
    <ligand>
        <name>ATP</name>
        <dbReference type="ChEBI" id="CHEBI:30616"/>
    </ligand>
</feature>
<feature type="binding site" evidence="1">
    <location>
        <position position="333"/>
    </location>
    <ligand>
        <name>substrate</name>
    </ligand>
</feature>
<feature type="binding site" evidence="1">
    <location>
        <begin position="449"/>
        <end position="450"/>
    </location>
    <ligand>
        <name>ATP</name>
        <dbReference type="ChEBI" id="CHEBI:30616"/>
    </ligand>
</feature>
<feature type="binding site" evidence="1">
    <location>
        <position position="455"/>
    </location>
    <ligand>
        <name>ATP</name>
        <dbReference type="ChEBI" id="CHEBI:30616"/>
    </ligand>
</feature>
<keyword id="KW-0067">ATP-binding</keyword>
<keyword id="KW-0963">Cytoplasm</keyword>
<keyword id="KW-0210">Decarboxylase</keyword>
<keyword id="KW-0312">Gluconeogenesis</keyword>
<keyword id="KW-0456">Lyase</keyword>
<keyword id="KW-0464">Manganese</keyword>
<keyword id="KW-0479">Metal-binding</keyword>
<keyword id="KW-0547">Nucleotide-binding</keyword>
<organism>
    <name type="scientific">Vibrio atlanticus (strain LGP32)</name>
    <name type="common">Vibrio splendidus (strain Mel32)</name>
    <dbReference type="NCBI Taxonomy" id="575788"/>
    <lineage>
        <taxon>Bacteria</taxon>
        <taxon>Pseudomonadati</taxon>
        <taxon>Pseudomonadota</taxon>
        <taxon>Gammaproteobacteria</taxon>
        <taxon>Vibrionales</taxon>
        <taxon>Vibrionaceae</taxon>
        <taxon>Vibrio</taxon>
    </lineage>
</organism>
<name>PCKA_VIBA3</name>
<dbReference type="EC" id="4.1.1.49" evidence="1"/>
<dbReference type="EMBL" id="FM954972">
    <property type="protein sequence ID" value="CAV17164.1"/>
    <property type="molecule type" value="Genomic_DNA"/>
</dbReference>
<dbReference type="SMR" id="B7VHF2"/>
<dbReference type="STRING" id="575788.VS_0131"/>
<dbReference type="KEGG" id="vsp:VS_0131"/>
<dbReference type="eggNOG" id="COG1866">
    <property type="taxonomic scope" value="Bacteria"/>
</dbReference>
<dbReference type="HOGENOM" id="CLU_018247_0_1_6"/>
<dbReference type="UniPathway" id="UPA00138"/>
<dbReference type="Proteomes" id="UP000009100">
    <property type="component" value="Chromosome 1"/>
</dbReference>
<dbReference type="GO" id="GO:0005829">
    <property type="term" value="C:cytosol"/>
    <property type="evidence" value="ECO:0007669"/>
    <property type="project" value="TreeGrafter"/>
</dbReference>
<dbReference type="GO" id="GO:0005524">
    <property type="term" value="F:ATP binding"/>
    <property type="evidence" value="ECO:0007669"/>
    <property type="project" value="UniProtKB-UniRule"/>
</dbReference>
<dbReference type="GO" id="GO:0046872">
    <property type="term" value="F:metal ion binding"/>
    <property type="evidence" value="ECO:0007669"/>
    <property type="project" value="UniProtKB-KW"/>
</dbReference>
<dbReference type="GO" id="GO:0004612">
    <property type="term" value="F:phosphoenolpyruvate carboxykinase (ATP) activity"/>
    <property type="evidence" value="ECO:0007669"/>
    <property type="project" value="UniProtKB-UniRule"/>
</dbReference>
<dbReference type="GO" id="GO:0006094">
    <property type="term" value="P:gluconeogenesis"/>
    <property type="evidence" value="ECO:0007669"/>
    <property type="project" value="UniProtKB-UniRule"/>
</dbReference>
<dbReference type="CDD" id="cd00484">
    <property type="entry name" value="PEPCK_ATP"/>
    <property type="match status" value="1"/>
</dbReference>
<dbReference type="FunFam" id="2.170.8.10:FF:000001">
    <property type="entry name" value="Phosphoenolpyruvate carboxykinase (ATP)"/>
    <property type="match status" value="1"/>
</dbReference>
<dbReference type="FunFam" id="3.40.449.10:FF:000001">
    <property type="entry name" value="Phosphoenolpyruvate carboxykinase (ATP)"/>
    <property type="match status" value="1"/>
</dbReference>
<dbReference type="Gene3D" id="3.90.228.20">
    <property type="match status" value="1"/>
</dbReference>
<dbReference type="Gene3D" id="3.40.449.10">
    <property type="entry name" value="Phosphoenolpyruvate Carboxykinase, domain 1"/>
    <property type="match status" value="1"/>
</dbReference>
<dbReference type="Gene3D" id="2.170.8.10">
    <property type="entry name" value="Phosphoenolpyruvate Carboxykinase, domain 2"/>
    <property type="match status" value="1"/>
</dbReference>
<dbReference type="HAMAP" id="MF_00453">
    <property type="entry name" value="PEPCK_ATP"/>
    <property type="match status" value="1"/>
</dbReference>
<dbReference type="InterPro" id="IPR001272">
    <property type="entry name" value="PEP_carboxykinase_ATP"/>
</dbReference>
<dbReference type="InterPro" id="IPR013035">
    <property type="entry name" value="PEP_carboxykinase_C"/>
</dbReference>
<dbReference type="InterPro" id="IPR008210">
    <property type="entry name" value="PEP_carboxykinase_N"/>
</dbReference>
<dbReference type="InterPro" id="IPR015994">
    <property type="entry name" value="PEPCK_ATP_CS"/>
</dbReference>
<dbReference type="NCBIfam" id="TIGR00224">
    <property type="entry name" value="pckA"/>
    <property type="match status" value="1"/>
</dbReference>
<dbReference type="NCBIfam" id="NF006819">
    <property type="entry name" value="PRK09344.1-1"/>
    <property type="match status" value="1"/>
</dbReference>
<dbReference type="NCBIfam" id="NF006820">
    <property type="entry name" value="PRK09344.1-2"/>
    <property type="match status" value="1"/>
</dbReference>
<dbReference type="NCBIfam" id="NF006821">
    <property type="entry name" value="PRK09344.1-3"/>
    <property type="match status" value="1"/>
</dbReference>
<dbReference type="PANTHER" id="PTHR30031:SF0">
    <property type="entry name" value="PHOSPHOENOLPYRUVATE CARBOXYKINASE (ATP)"/>
    <property type="match status" value="1"/>
</dbReference>
<dbReference type="PANTHER" id="PTHR30031">
    <property type="entry name" value="PHOSPHOENOLPYRUVATE CARBOXYKINASE ATP"/>
    <property type="match status" value="1"/>
</dbReference>
<dbReference type="Pfam" id="PF01293">
    <property type="entry name" value="PEPCK_ATP"/>
    <property type="match status" value="1"/>
</dbReference>
<dbReference type="PIRSF" id="PIRSF006294">
    <property type="entry name" value="PEP_crbxkin"/>
    <property type="match status" value="1"/>
</dbReference>
<dbReference type="SUPFAM" id="SSF68923">
    <property type="entry name" value="PEP carboxykinase N-terminal domain"/>
    <property type="match status" value="1"/>
</dbReference>
<dbReference type="SUPFAM" id="SSF53795">
    <property type="entry name" value="PEP carboxykinase-like"/>
    <property type="match status" value="1"/>
</dbReference>
<dbReference type="PROSITE" id="PS00532">
    <property type="entry name" value="PEPCK_ATP"/>
    <property type="match status" value="1"/>
</dbReference>
<protein>
    <recommendedName>
        <fullName evidence="1">Phosphoenolpyruvate carboxykinase (ATP)</fullName>
        <shortName evidence="1">PCK</shortName>
        <shortName evidence="1">PEP carboxykinase</shortName>
        <shortName evidence="1">PEPCK</shortName>
        <ecNumber evidence="1">4.1.1.49</ecNumber>
    </recommendedName>
</protein>
<evidence type="ECO:0000255" key="1">
    <source>
        <dbReference type="HAMAP-Rule" id="MF_00453"/>
    </source>
</evidence>
<comment type="function">
    <text evidence="1">Involved in the gluconeogenesis. Catalyzes the conversion of oxaloacetate (OAA) to phosphoenolpyruvate (PEP) through direct phosphoryl transfer between the nucleoside triphosphate and OAA.</text>
</comment>
<comment type="catalytic activity">
    <reaction evidence="1">
        <text>oxaloacetate + ATP = phosphoenolpyruvate + ADP + CO2</text>
        <dbReference type="Rhea" id="RHEA:18617"/>
        <dbReference type="ChEBI" id="CHEBI:16452"/>
        <dbReference type="ChEBI" id="CHEBI:16526"/>
        <dbReference type="ChEBI" id="CHEBI:30616"/>
        <dbReference type="ChEBI" id="CHEBI:58702"/>
        <dbReference type="ChEBI" id="CHEBI:456216"/>
        <dbReference type="EC" id="4.1.1.49"/>
    </reaction>
</comment>
<comment type="cofactor">
    <cofactor evidence="1">
        <name>Mn(2+)</name>
        <dbReference type="ChEBI" id="CHEBI:29035"/>
    </cofactor>
    <text evidence="1">Binds 1 Mn(2+) ion per subunit.</text>
</comment>
<comment type="pathway">
    <text evidence="1">Carbohydrate biosynthesis; gluconeogenesis.</text>
</comment>
<comment type="subunit">
    <text evidence="1">Monomer.</text>
</comment>
<comment type="subcellular location">
    <subcellularLocation>
        <location evidence="1">Cytoplasm</location>
    </subcellularLocation>
</comment>
<comment type="similarity">
    <text evidence="1">Belongs to the phosphoenolpyruvate carboxykinase (ATP) family.</text>
</comment>